<reference key="1">
    <citation type="submission" date="2008-06" db="EMBL/GenBank/DDBJ databases">
        <title>Complete sequence of Stenotrophomonas maltophilia R551-3.</title>
        <authorList>
            <consortium name="US DOE Joint Genome Institute"/>
            <person name="Lucas S."/>
            <person name="Copeland A."/>
            <person name="Lapidus A."/>
            <person name="Glavina del Rio T."/>
            <person name="Dalin E."/>
            <person name="Tice H."/>
            <person name="Pitluck S."/>
            <person name="Chain P."/>
            <person name="Malfatti S."/>
            <person name="Shin M."/>
            <person name="Vergez L."/>
            <person name="Lang D."/>
            <person name="Schmutz J."/>
            <person name="Larimer F."/>
            <person name="Land M."/>
            <person name="Hauser L."/>
            <person name="Kyrpides N."/>
            <person name="Mikhailova N."/>
            <person name="Taghavi S."/>
            <person name="Monchy S."/>
            <person name="Newman L."/>
            <person name="Vangronsveld J."/>
            <person name="van der Lelie D."/>
            <person name="Richardson P."/>
        </authorList>
    </citation>
    <scope>NUCLEOTIDE SEQUENCE [LARGE SCALE GENOMIC DNA]</scope>
    <source>
        <strain>R551-3</strain>
    </source>
</reference>
<name>SYP_STRM5</name>
<feature type="chain" id="PRO_1000199425" description="Proline--tRNA ligase">
    <location>
        <begin position="1"/>
        <end position="567"/>
    </location>
</feature>
<protein>
    <recommendedName>
        <fullName evidence="1">Proline--tRNA ligase</fullName>
        <ecNumber evidence="1">6.1.1.15</ecNumber>
    </recommendedName>
    <alternativeName>
        <fullName evidence="1">Prolyl-tRNA synthetase</fullName>
        <shortName evidence="1">ProRS</shortName>
    </alternativeName>
</protein>
<gene>
    <name evidence="1" type="primary">proS</name>
    <name type="ordered locus">Smal_0527</name>
</gene>
<keyword id="KW-0030">Aminoacyl-tRNA synthetase</keyword>
<keyword id="KW-0067">ATP-binding</keyword>
<keyword id="KW-0963">Cytoplasm</keyword>
<keyword id="KW-0436">Ligase</keyword>
<keyword id="KW-0547">Nucleotide-binding</keyword>
<keyword id="KW-0648">Protein biosynthesis</keyword>
<sequence length="567" mass="62186">MRLSQFHLHTTKETPSDAELTSHRLMLRAGMIRKLASGLYTWSPLGLRVLRKVERIVREEMDRAGAVEFQIPTIQPKELWEQTGRWQKFGPQLLKIKDRKDQTFCYSPTAEEAACDFARSELSSYKQLPVNFYQIQTKFRDEIRPRFGVMRSREFLMKDAYSFHLHDECLVREYENMKSAYSRIFTRLGLDFRMVQADSGAIGGDASQEFHVIADSGEDALVFSTGSDYAANMEAAIAADPAPRAAASEAMRKVDTPTQKTCEDVAALLGINLQRTVKSVALIAGEGEAQQFVLVLVRGDHEVNEIKLAKVAGLDEQRFASEAEIAEHLGSVPGFLGPIAPAKAIRVVADREVAAMSDFVVGANEAGFHLAGVNWGRDLAEPEVADIRNVRAGDRALDGGELKIARGIEVGHVFQLGRTYARALDATVLDENGKAAVMAMGCYGIGISRVVAAAIEQNHDDAGIIWPDAMAPWQVVVCVINPKGDAAVADAATNLLQELRDAGLDAALDDRGLRPGAMFADMELIGIPHRVVVSERGLAAGTYEYRSRRASEAESLDKATLLQRLQG</sequence>
<dbReference type="EC" id="6.1.1.15" evidence="1"/>
<dbReference type="EMBL" id="CP001111">
    <property type="protein sequence ID" value="ACF50232.1"/>
    <property type="molecule type" value="Genomic_DNA"/>
</dbReference>
<dbReference type="RefSeq" id="WP_012510001.1">
    <property type="nucleotide sequence ID" value="NC_011071.1"/>
</dbReference>
<dbReference type="SMR" id="B4SJ64"/>
<dbReference type="STRING" id="391008.Smal_0527"/>
<dbReference type="KEGG" id="smt:Smal_0527"/>
<dbReference type="eggNOG" id="COG0442">
    <property type="taxonomic scope" value="Bacteria"/>
</dbReference>
<dbReference type="HOGENOM" id="CLU_016739_0_0_6"/>
<dbReference type="OrthoDB" id="9809052at2"/>
<dbReference type="Proteomes" id="UP000001867">
    <property type="component" value="Chromosome"/>
</dbReference>
<dbReference type="GO" id="GO:0005829">
    <property type="term" value="C:cytosol"/>
    <property type="evidence" value="ECO:0007669"/>
    <property type="project" value="TreeGrafter"/>
</dbReference>
<dbReference type="GO" id="GO:0002161">
    <property type="term" value="F:aminoacyl-tRNA deacylase activity"/>
    <property type="evidence" value="ECO:0007669"/>
    <property type="project" value="InterPro"/>
</dbReference>
<dbReference type="GO" id="GO:0005524">
    <property type="term" value="F:ATP binding"/>
    <property type="evidence" value="ECO:0007669"/>
    <property type="project" value="UniProtKB-UniRule"/>
</dbReference>
<dbReference type="GO" id="GO:0004827">
    <property type="term" value="F:proline-tRNA ligase activity"/>
    <property type="evidence" value="ECO:0007669"/>
    <property type="project" value="UniProtKB-UniRule"/>
</dbReference>
<dbReference type="GO" id="GO:0006433">
    <property type="term" value="P:prolyl-tRNA aminoacylation"/>
    <property type="evidence" value="ECO:0007669"/>
    <property type="project" value="UniProtKB-UniRule"/>
</dbReference>
<dbReference type="CDD" id="cd04334">
    <property type="entry name" value="ProRS-INS"/>
    <property type="match status" value="1"/>
</dbReference>
<dbReference type="CDD" id="cd00861">
    <property type="entry name" value="ProRS_anticodon_short"/>
    <property type="match status" value="1"/>
</dbReference>
<dbReference type="CDD" id="cd00779">
    <property type="entry name" value="ProRS_core_prok"/>
    <property type="match status" value="1"/>
</dbReference>
<dbReference type="FunFam" id="3.30.930.10:FF:000012">
    <property type="entry name" value="Proline--tRNA ligase"/>
    <property type="match status" value="1"/>
</dbReference>
<dbReference type="FunFam" id="3.30.930.10:FF:000065">
    <property type="entry name" value="Proline--tRNA ligase"/>
    <property type="match status" value="1"/>
</dbReference>
<dbReference type="Gene3D" id="3.40.50.800">
    <property type="entry name" value="Anticodon-binding domain"/>
    <property type="match status" value="1"/>
</dbReference>
<dbReference type="Gene3D" id="3.30.930.10">
    <property type="entry name" value="Bira Bifunctional Protein, Domain 2"/>
    <property type="match status" value="2"/>
</dbReference>
<dbReference type="Gene3D" id="3.90.960.10">
    <property type="entry name" value="YbaK/aminoacyl-tRNA synthetase-associated domain"/>
    <property type="match status" value="1"/>
</dbReference>
<dbReference type="HAMAP" id="MF_01569">
    <property type="entry name" value="Pro_tRNA_synth_type1"/>
    <property type="match status" value="1"/>
</dbReference>
<dbReference type="InterPro" id="IPR002314">
    <property type="entry name" value="aa-tRNA-synt_IIb"/>
</dbReference>
<dbReference type="InterPro" id="IPR006195">
    <property type="entry name" value="aa-tRNA-synth_II"/>
</dbReference>
<dbReference type="InterPro" id="IPR045864">
    <property type="entry name" value="aa-tRNA-synth_II/BPL/LPL"/>
</dbReference>
<dbReference type="InterPro" id="IPR004154">
    <property type="entry name" value="Anticodon-bd"/>
</dbReference>
<dbReference type="InterPro" id="IPR036621">
    <property type="entry name" value="Anticodon-bd_dom_sf"/>
</dbReference>
<dbReference type="InterPro" id="IPR002316">
    <property type="entry name" value="Pro-tRNA-ligase_IIa"/>
</dbReference>
<dbReference type="InterPro" id="IPR004500">
    <property type="entry name" value="Pro-tRNA-synth_IIa_bac-type"/>
</dbReference>
<dbReference type="InterPro" id="IPR023717">
    <property type="entry name" value="Pro-tRNA-Synthase_IIa_type1"/>
</dbReference>
<dbReference type="InterPro" id="IPR050062">
    <property type="entry name" value="Pro-tRNA_synthetase"/>
</dbReference>
<dbReference type="InterPro" id="IPR044140">
    <property type="entry name" value="ProRS_anticodon_short"/>
</dbReference>
<dbReference type="InterPro" id="IPR033730">
    <property type="entry name" value="ProRS_core_prok"/>
</dbReference>
<dbReference type="InterPro" id="IPR036754">
    <property type="entry name" value="YbaK/aa-tRNA-synt-asso_dom_sf"/>
</dbReference>
<dbReference type="InterPro" id="IPR007214">
    <property type="entry name" value="YbaK/aa-tRNA-synth-assoc-dom"/>
</dbReference>
<dbReference type="NCBIfam" id="NF006625">
    <property type="entry name" value="PRK09194.1"/>
    <property type="match status" value="1"/>
</dbReference>
<dbReference type="NCBIfam" id="TIGR00409">
    <property type="entry name" value="proS_fam_II"/>
    <property type="match status" value="1"/>
</dbReference>
<dbReference type="PANTHER" id="PTHR42753">
    <property type="entry name" value="MITOCHONDRIAL RIBOSOME PROTEIN L39/PROLYL-TRNA LIGASE FAMILY MEMBER"/>
    <property type="match status" value="1"/>
</dbReference>
<dbReference type="PANTHER" id="PTHR42753:SF2">
    <property type="entry name" value="PROLINE--TRNA LIGASE"/>
    <property type="match status" value="1"/>
</dbReference>
<dbReference type="Pfam" id="PF03129">
    <property type="entry name" value="HGTP_anticodon"/>
    <property type="match status" value="1"/>
</dbReference>
<dbReference type="Pfam" id="PF00587">
    <property type="entry name" value="tRNA-synt_2b"/>
    <property type="match status" value="1"/>
</dbReference>
<dbReference type="Pfam" id="PF04073">
    <property type="entry name" value="tRNA_edit"/>
    <property type="match status" value="1"/>
</dbReference>
<dbReference type="PRINTS" id="PR01046">
    <property type="entry name" value="TRNASYNTHPRO"/>
</dbReference>
<dbReference type="SUPFAM" id="SSF52954">
    <property type="entry name" value="Class II aaRS ABD-related"/>
    <property type="match status" value="1"/>
</dbReference>
<dbReference type="SUPFAM" id="SSF55681">
    <property type="entry name" value="Class II aaRS and biotin synthetases"/>
    <property type="match status" value="1"/>
</dbReference>
<dbReference type="SUPFAM" id="SSF55826">
    <property type="entry name" value="YbaK/ProRS associated domain"/>
    <property type="match status" value="1"/>
</dbReference>
<dbReference type="PROSITE" id="PS50862">
    <property type="entry name" value="AA_TRNA_LIGASE_II"/>
    <property type="match status" value="1"/>
</dbReference>
<comment type="function">
    <text evidence="1">Catalyzes the attachment of proline to tRNA(Pro) in a two-step reaction: proline is first activated by ATP to form Pro-AMP and then transferred to the acceptor end of tRNA(Pro). As ProRS can inadvertently accommodate and process non-cognate amino acids such as alanine and cysteine, to avoid such errors it has two additional distinct editing activities against alanine. One activity is designated as 'pretransfer' editing and involves the tRNA(Pro)-independent hydrolysis of activated Ala-AMP. The other activity is designated 'posttransfer' editing and involves deacylation of mischarged Ala-tRNA(Pro). The misacylated Cys-tRNA(Pro) is not edited by ProRS.</text>
</comment>
<comment type="catalytic activity">
    <reaction evidence="1">
        <text>tRNA(Pro) + L-proline + ATP = L-prolyl-tRNA(Pro) + AMP + diphosphate</text>
        <dbReference type="Rhea" id="RHEA:14305"/>
        <dbReference type="Rhea" id="RHEA-COMP:9700"/>
        <dbReference type="Rhea" id="RHEA-COMP:9702"/>
        <dbReference type="ChEBI" id="CHEBI:30616"/>
        <dbReference type="ChEBI" id="CHEBI:33019"/>
        <dbReference type="ChEBI" id="CHEBI:60039"/>
        <dbReference type="ChEBI" id="CHEBI:78442"/>
        <dbReference type="ChEBI" id="CHEBI:78532"/>
        <dbReference type="ChEBI" id="CHEBI:456215"/>
        <dbReference type="EC" id="6.1.1.15"/>
    </reaction>
</comment>
<comment type="subunit">
    <text evidence="1">Homodimer.</text>
</comment>
<comment type="subcellular location">
    <subcellularLocation>
        <location evidence="1">Cytoplasm</location>
    </subcellularLocation>
</comment>
<comment type="domain">
    <text evidence="1">Consists of three domains: the N-terminal catalytic domain, the editing domain and the C-terminal anticodon-binding domain.</text>
</comment>
<comment type="similarity">
    <text evidence="1">Belongs to the class-II aminoacyl-tRNA synthetase family. ProS type 1 subfamily.</text>
</comment>
<proteinExistence type="inferred from homology"/>
<organism>
    <name type="scientific">Stenotrophomonas maltophilia (strain R551-3)</name>
    <dbReference type="NCBI Taxonomy" id="391008"/>
    <lineage>
        <taxon>Bacteria</taxon>
        <taxon>Pseudomonadati</taxon>
        <taxon>Pseudomonadota</taxon>
        <taxon>Gammaproteobacteria</taxon>
        <taxon>Lysobacterales</taxon>
        <taxon>Lysobacteraceae</taxon>
        <taxon>Stenotrophomonas</taxon>
        <taxon>Stenotrophomonas maltophilia group</taxon>
    </lineage>
</organism>
<evidence type="ECO:0000255" key="1">
    <source>
        <dbReference type="HAMAP-Rule" id="MF_01569"/>
    </source>
</evidence>
<accession>B4SJ64</accession>